<dbReference type="EC" id="3.1.-.-"/>
<dbReference type="EMBL" id="X04140">
    <property type="protein sequence ID" value="CAA27758.1"/>
    <property type="molecule type" value="Genomic_DNA"/>
</dbReference>
<dbReference type="EMBL" id="AF158101">
    <property type="protein sequence ID" value="AAD42523.1"/>
    <property type="molecule type" value="Genomic_DNA"/>
</dbReference>
<dbReference type="PIR" id="S08602">
    <property type="entry name" value="S08602"/>
</dbReference>
<dbReference type="KEGG" id="vg:1258778"/>
<dbReference type="OrthoDB" id="5361at10239"/>
<dbReference type="Proteomes" id="UP000009087">
    <property type="component" value="Segment"/>
</dbReference>
<dbReference type="GO" id="GO:0004519">
    <property type="term" value="F:endonuclease activity"/>
    <property type="evidence" value="ECO:0007669"/>
    <property type="project" value="UniProtKB-KW"/>
</dbReference>
<dbReference type="GO" id="GO:0006314">
    <property type="term" value="P:intron homing"/>
    <property type="evidence" value="ECO:0007669"/>
    <property type="project" value="UniProtKB-KW"/>
</dbReference>
<sequence length="97" mass="11330">MLTDLYLKILMEEHKKRTSAKTLEMVKNGTHPAQKEITCDFCGHIGKGPGFYLKHNDRCKLNPNRIQLNCPYCDKKDLSPSTYKRWHGDNCKTRFND</sequence>
<keyword id="KW-0255">Endonuclease</keyword>
<keyword id="KW-0378">Hydrolase</keyword>
<keyword id="KW-0404">Intron homing</keyword>
<keyword id="KW-0540">Nuclease</keyword>
<keyword id="KW-1185">Reference proteome</keyword>
<feature type="chain" id="PRO_0000192795" description="Defective intron-associated endonuclease 3">
    <location>
        <begin position="1"/>
        <end position="97"/>
    </location>
</feature>
<proteinExistence type="inferred from homology"/>
<comment type="function">
    <text evidence="1">This endonuclease is specific to the nrdB gene splice junction and is involved in intron homing.</text>
</comment>
<evidence type="ECO:0000250" key="1"/>
<organismHost>
    <name type="scientific">Escherichia coli</name>
    <dbReference type="NCBI Taxonomy" id="562"/>
</organismHost>
<gene>
    <name type="primary">ITEVIIIR</name>
</gene>
<protein>
    <recommendedName>
        <fullName>Defective intron-associated endonuclease 3</fullName>
        <ecNumber>3.1.-.-</ecNumber>
    </recommendedName>
    <alternativeName>
        <fullName>I-TevIII</fullName>
    </alternativeName>
</protein>
<name>TEV3_BPT4</name>
<organism>
    <name type="scientific">Enterobacteria phage T4</name>
    <name type="common">Bacteriophage T4</name>
    <dbReference type="NCBI Taxonomy" id="10665"/>
    <lineage>
        <taxon>Viruses</taxon>
        <taxon>Duplodnaviria</taxon>
        <taxon>Heunggongvirae</taxon>
        <taxon>Uroviricota</taxon>
        <taxon>Caudoviricetes</taxon>
        <taxon>Straboviridae</taxon>
        <taxon>Tevenvirinae</taxon>
        <taxon>Tequatrovirus</taxon>
    </lineage>
</organism>
<accession>P39514</accession>
<reference key="1">
    <citation type="journal article" date="1986" name="EMBO J.">
        <title>The bacteriophage T4 gene for the small subunit of ribonucleotide reductase contains an intron.</title>
        <authorList>
            <person name="Sjoeberg B.-M."/>
            <person name="Hahne S."/>
            <person name="Mathews C.Z."/>
            <person name="Mathews C.K."/>
            <person name="Rand K.N."/>
            <person name="Gait M.J."/>
        </authorList>
    </citation>
    <scope>NUCLEOTIDE SEQUENCE [GENOMIC DNA]</scope>
</reference>
<reference key="2">
    <citation type="journal article" date="2003" name="Microbiol. Mol. Biol. Rev.">
        <title>Bacteriophage T4 genome.</title>
        <authorList>
            <person name="Miller E.S."/>
            <person name="Kutter E."/>
            <person name="Mosig G."/>
            <person name="Arisaka F."/>
            <person name="Kunisawa T."/>
            <person name="Ruger W."/>
        </authorList>
    </citation>
    <scope>NUCLEOTIDE SEQUENCE [LARGE SCALE GENOMIC DNA]</scope>
</reference>